<sequence length="358" mass="39581">MRKIIHIDMDCYFAAVEMRDFPEYRGKPLAVGGSSDRRGVISTCSYEARKFGVRSAMATAYAFKLCPDLILVPGRMQVYKEVSLQIREIFSRYTPLIEPLSLDEAYLDVSECQQYKGSATLIAQAIRRDILAETGLTASAGIAPVKFLAKVASDLNKPNGQYVITPETLPDFVKTLSLRKIPGVGKVTAEKLSSLGLNTCGDVQAYSKPELLARFGKFGGVLIERSQGIDERGISADRERKSVGVETTLAKDIYSLEQCQQVMPGLIQELALRLSRSAKERKIHKQVVKLKFNDFKQTTIEHRSDEVSIVMFYDLLAQAMARQEGRGIRLLGISVGLADSILAVPEIPNAQTQLDLAL</sequence>
<accession>A9L0T3</accession>
<keyword id="KW-0963">Cytoplasm</keyword>
<keyword id="KW-0227">DNA damage</keyword>
<keyword id="KW-0234">DNA repair</keyword>
<keyword id="KW-0235">DNA replication</keyword>
<keyword id="KW-0238">DNA-binding</keyword>
<keyword id="KW-0239">DNA-directed DNA polymerase</keyword>
<keyword id="KW-0460">Magnesium</keyword>
<keyword id="KW-0479">Metal-binding</keyword>
<keyword id="KW-0515">Mutator protein</keyword>
<keyword id="KW-0548">Nucleotidyltransferase</keyword>
<keyword id="KW-0808">Transferase</keyword>
<comment type="function">
    <text evidence="1">Poorly processive, error-prone DNA polymerase involved in untargeted mutagenesis. Copies undamaged DNA at stalled replication forks, which arise in vivo from mismatched or misaligned primer ends. These misaligned primers can be extended by PolIV. Exhibits no 3'-5' exonuclease (proofreading) activity. May be involved in translesional synthesis, in conjunction with the beta clamp from PolIII.</text>
</comment>
<comment type="catalytic activity">
    <reaction evidence="1">
        <text>DNA(n) + a 2'-deoxyribonucleoside 5'-triphosphate = DNA(n+1) + diphosphate</text>
        <dbReference type="Rhea" id="RHEA:22508"/>
        <dbReference type="Rhea" id="RHEA-COMP:17339"/>
        <dbReference type="Rhea" id="RHEA-COMP:17340"/>
        <dbReference type="ChEBI" id="CHEBI:33019"/>
        <dbReference type="ChEBI" id="CHEBI:61560"/>
        <dbReference type="ChEBI" id="CHEBI:173112"/>
        <dbReference type="EC" id="2.7.7.7"/>
    </reaction>
</comment>
<comment type="cofactor">
    <cofactor evidence="1">
        <name>Mg(2+)</name>
        <dbReference type="ChEBI" id="CHEBI:18420"/>
    </cofactor>
    <text evidence="1">Binds 2 magnesium ions per subunit.</text>
</comment>
<comment type="subunit">
    <text evidence="1">Monomer.</text>
</comment>
<comment type="subcellular location">
    <subcellularLocation>
        <location evidence="1">Cytoplasm</location>
    </subcellularLocation>
</comment>
<comment type="similarity">
    <text evidence="1">Belongs to the DNA polymerase type-Y family.</text>
</comment>
<proteinExistence type="inferred from homology"/>
<protein>
    <recommendedName>
        <fullName evidence="1">DNA polymerase IV</fullName>
        <shortName evidence="1">Pol IV</shortName>
        <ecNumber evidence="1">2.7.7.7</ecNumber>
    </recommendedName>
</protein>
<name>DPO4_SHEB9</name>
<gene>
    <name evidence="1" type="primary">dinB</name>
    <name type="ordered locus">Sbal195_3552</name>
</gene>
<evidence type="ECO:0000255" key="1">
    <source>
        <dbReference type="HAMAP-Rule" id="MF_01113"/>
    </source>
</evidence>
<organism>
    <name type="scientific">Shewanella baltica (strain OS195)</name>
    <dbReference type="NCBI Taxonomy" id="399599"/>
    <lineage>
        <taxon>Bacteria</taxon>
        <taxon>Pseudomonadati</taxon>
        <taxon>Pseudomonadota</taxon>
        <taxon>Gammaproteobacteria</taxon>
        <taxon>Alteromonadales</taxon>
        <taxon>Shewanellaceae</taxon>
        <taxon>Shewanella</taxon>
    </lineage>
</organism>
<reference key="1">
    <citation type="submission" date="2007-11" db="EMBL/GenBank/DDBJ databases">
        <title>Complete sequence of chromosome of Shewanella baltica OS195.</title>
        <authorList>
            <consortium name="US DOE Joint Genome Institute"/>
            <person name="Copeland A."/>
            <person name="Lucas S."/>
            <person name="Lapidus A."/>
            <person name="Barry K."/>
            <person name="Glavina del Rio T."/>
            <person name="Dalin E."/>
            <person name="Tice H."/>
            <person name="Pitluck S."/>
            <person name="Chain P."/>
            <person name="Malfatti S."/>
            <person name="Shin M."/>
            <person name="Vergez L."/>
            <person name="Schmutz J."/>
            <person name="Larimer F."/>
            <person name="Land M."/>
            <person name="Hauser L."/>
            <person name="Kyrpides N."/>
            <person name="Kim E."/>
            <person name="Brettar I."/>
            <person name="Rodrigues J."/>
            <person name="Konstantinidis K."/>
            <person name="Klappenbach J."/>
            <person name="Hofle M."/>
            <person name="Tiedje J."/>
            <person name="Richardson P."/>
        </authorList>
    </citation>
    <scope>NUCLEOTIDE SEQUENCE [LARGE SCALE GENOMIC DNA]</scope>
    <source>
        <strain>OS195</strain>
    </source>
</reference>
<dbReference type="EC" id="2.7.7.7" evidence="1"/>
<dbReference type="EMBL" id="CP000891">
    <property type="protein sequence ID" value="ABX50714.1"/>
    <property type="molecule type" value="Genomic_DNA"/>
</dbReference>
<dbReference type="RefSeq" id="WP_006083932.1">
    <property type="nucleotide sequence ID" value="NC_009997.1"/>
</dbReference>
<dbReference type="SMR" id="A9L0T3"/>
<dbReference type="GeneID" id="11773589"/>
<dbReference type="KEGG" id="sbn:Sbal195_3552"/>
<dbReference type="HOGENOM" id="CLU_012348_1_2_6"/>
<dbReference type="Proteomes" id="UP000000770">
    <property type="component" value="Chromosome"/>
</dbReference>
<dbReference type="GO" id="GO:0005829">
    <property type="term" value="C:cytosol"/>
    <property type="evidence" value="ECO:0007669"/>
    <property type="project" value="TreeGrafter"/>
</dbReference>
<dbReference type="GO" id="GO:0003684">
    <property type="term" value="F:damaged DNA binding"/>
    <property type="evidence" value="ECO:0007669"/>
    <property type="project" value="InterPro"/>
</dbReference>
<dbReference type="GO" id="GO:0003887">
    <property type="term" value="F:DNA-directed DNA polymerase activity"/>
    <property type="evidence" value="ECO:0007669"/>
    <property type="project" value="UniProtKB-UniRule"/>
</dbReference>
<dbReference type="GO" id="GO:0000287">
    <property type="term" value="F:magnesium ion binding"/>
    <property type="evidence" value="ECO:0007669"/>
    <property type="project" value="UniProtKB-UniRule"/>
</dbReference>
<dbReference type="GO" id="GO:0006261">
    <property type="term" value="P:DNA-templated DNA replication"/>
    <property type="evidence" value="ECO:0007669"/>
    <property type="project" value="UniProtKB-UniRule"/>
</dbReference>
<dbReference type="GO" id="GO:0042276">
    <property type="term" value="P:error-prone translesion synthesis"/>
    <property type="evidence" value="ECO:0007669"/>
    <property type="project" value="TreeGrafter"/>
</dbReference>
<dbReference type="GO" id="GO:0009432">
    <property type="term" value="P:SOS response"/>
    <property type="evidence" value="ECO:0007669"/>
    <property type="project" value="TreeGrafter"/>
</dbReference>
<dbReference type="CDD" id="cd03586">
    <property type="entry name" value="PolY_Pol_IV_kappa"/>
    <property type="match status" value="1"/>
</dbReference>
<dbReference type="FunFam" id="1.10.150.20:FF:000019">
    <property type="entry name" value="DNA polymerase IV"/>
    <property type="match status" value="1"/>
</dbReference>
<dbReference type="FunFam" id="3.30.70.270:FF:000002">
    <property type="entry name" value="DNA polymerase IV"/>
    <property type="match status" value="1"/>
</dbReference>
<dbReference type="FunFam" id="3.40.1170.60:FF:000001">
    <property type="entry name" value="DNA polymerase IV"/>
    <property type="match status" value="1"/>
</dbReference>
<dbReference type="Gene3D" id="3.30.70.270">
    <property type="match status" value="1"/>
</dbReference>
<dbReference type="Gene3D" id="3.40.1170.60">
    <property type="match status" value="1"/>
</dbReference>
<dbReference type="Gene3D" id="1.10.150.20">
    <property type="entry name" value="5' to 3' exonuclease, C-terminal subdomain"/>
    <property type="match status" value="1"/>
</dbReference>
<dbReference type="Gene3D" id="3.30.1490.100">
    <property type="entry name" value="DNA polymerase, Y-family, little finger domain"/>
    <property type="match status" value="1"/>
</dbReference>
<dbReference type="HAMAP" id="MF_01113">
    <property type="entry name" value="DNApol_IV"/>
    <property type="match status" value="1"/>
</dbReference>
<dbReference type="InterPro" id="IPR043502">
    <property type="entry name" value="DNA/RNA_pol_sf"/>
</dbReference>
<dbReference type="InterPro" id="IPR036775">
    <property type="entry name" value="DNA_pol_Y-fam_lit_finger_sf"/>
</dbReference>
<dbReference type="InterPro" id="IPR017961">
    <property type="entry name" value="DNA_pol_Y-fam_little_finger"/>
</dbReference>
<dbReference type="InterPro" id="IPR050116">
    <property type="entry name" value="DNA_polymerase-Y"/>
</dbReference>
<dbReference type="InterPro" id="IPR022880">
    <property type="entry name" value="DNApol_IV"/>
</dbReference>
<dbReference type="InterPro" id="IPR053848">
    <property type="entry name" value="IMS_HHH_1"/>
</dbReference>
<dbReference type="InterPro" id="IPR043128">
    <property type="entry name" value="Rev_trsase/Diguanyl_cyclase"/>
</dbReference>
<dbReference type="InterPro" id="IPR001126">
    <property type="entry name" value="UmuC"/>
</dbReference>
<dbReference type="NCBIfam" id="NF002677">
    <property type="entry name" value="PRK02406.1"/>
    <property type="match status" value="1"/>
</dbReference>
<dbReference type="PANTHER" id="PTHR11076:SF33">
    <property type="entry name" value="DNA POLYMERASE KAPPA"/>
    <property type="match status" value="1"/>
</dbReference>
<dbReference type="PANTHER" id="PTHR11076">
    <property type="entry name" value="DNA REPAIR POLYMERASE UMUC / TRANSFERASE FAMILY MEMBER"/>
    <property type="match status" value="1"/>
</dbReference>
<dbReference type="Pfam" id="PF00817">
    <property type="entry name" value="IMS"/>
    <property type="match status" value="1"/>
</dbReference>
<dbReference type="Pfam" id="PF11799">
    <property type="entry name" value="IMS_C"/>
    <property type="match status" value="1"/>
</dbReference>
<dbReference type="Pfam" id="PF21999">
    <property type="entry name" value="IMS_HHH_1"/>
    <property type="match status" value="1"/>
</dbReference>
<dbReference type="SUPFAM" id="SSF56672">
    <property type="entry name" value="DNA/RNA polymerases"/>
    <property type="match status" value="1"/>
</dbReference>
<dbReference type="SUPFAM" id="SSF100879">
    <property type="entry name" value="Lesion bypass DNA polymerase (Y-family), little finger domain"/>
    <property type="match status" value="1"/>
</dbReference>
<dbReference type="PROSITE" id="PS50173">
    <property type="entry name" value="UMUC"/>
    <property type="match status" value="1"/>
</dbReference>
<feature type="chain" id="PRO_1000084928" description="DNA polymerase IV">
    <location>
        <begin position="1"/>
        <end position="358"/>
    </location>
</feature>
<feature type="domain" description="UmuC" evidence="1">
    <location>
        <begin position="4"/>
        <end position="185"/>
    </location>
</feature>
<feature type="active site" evidence="1">
    <location>
        <position position="104"/>
    </location>
</feature>
<feature type="binding site" evidence="1">
    <location>
        <position position="8"/>
    </location>
    <ligand>
        <name>Mg(2+)</name>
        <dbReference type="ChEBI" id="CHEBI:18420"/>
    </ligand>
</feature>
<feature type="binding site" evidence="1">
    <location>
        <position position="103"/>
    </location>
    <ligand>
        <name>Mg(2+)</name>
        <dbReference type="ChEBI" id="CHEBI:18420"/>
    </ligand>
</feature>
<feature type="site" description="Substrate discrimination" evidence="1">
    <location>
        <position position="13"/>
    </location>
</feature>